<accession>Q73FD1</accession>
<evidence type="ECO:0000255" key="1">
    <source>
        <dbReference type="HAMAP-Rule" id="MF_00252"/>
    </source>
</evidence>
<protein>
    <recommendedName>
        <fullName evidence="1">Lysine--tRNA ligase</fullName>
        <ecNumber evidence="1">6.1.1.6</ecNumber>
    </recommendedName>
    <alternativeName>
        <fullName evidence="1">Lysyl-tRNA synthetase</fullName>
        <shortName evidence="1">LysRS</shortName>
    </alternativeName>
</protein>
<feature type="chain" id="PRO_1000012842" description="Lysine--tRNA ligase">
    <location>
        <begin position="1"/>
        <end position="499"/>
    </location>
</feature>
<feature type="binding site" evidence="1">
    <location>
        <position position="408"/>
    </location>
    <ligand>
        <name>Mg(2+)</name>
        <dbReference type="ChEBI" id="CHEBI:18420"/>
        <label>1</label>
    </ligand>
</feature>
<feature type="binding site" evidence="1">
    <location>
        <position position="415"/>
    </location>
    <ligand>
        <name>Mg(2+)</name>
        <dbReference type="ChEBI" id="CHEBI:18420"/>
        <label>1</label>
    </ligand>
</feature>
<feature type="binding site" evidence="1">
    <location>
        <position position="415"/>
    </location>
    <ligand>
        <name>Mg(2+)</name>
        <dbReference type="ChEBI" id="CHEBI:18420"/>
        <label>2</label>
    </ligand>
</feature>
<dbReference type="EC" id="6.1.1.6" evidence="1"/>
<dbReference type="EMBL" id="AE017194">
    <property type="protein sequence ID" value="AAS39011.1"/>
    <property type="molecule type" value="Genomic_DNA"/>
</dbReference>
<dbReference type="SMR" id="Q73FD1"/>
<dbReference type="KEGG" id="bca:BCE_0075"/>
<dbReference type="HOGENOM" id="CLU_008255_6_0_9"/>
<dbReference type="Proteomes" id="UP000002527">
    <property type="component" value="Chromosome"/>
</dbReference>
<dbReference type="GO" id="GO:0005829">
    <property type="term" value="C:cytosol"/>
    <property type="evidence" value="ECO:0007669"/>
    <property type="project" value="TreeGrafter"/>
</dbReference>
<dbReference type="GO" id="GO:0005524">
    <property type="term" value="F:ATP binding"/>
    <property type="evidence" value="ECO:0007669"/>
    <property type="project" value="UniProtKB-UniRule"/>
</dbReference>
<dbReference type="GO" id="GO:0140096">
    <property type="term" value="F:catalytic activity, acting on a protein"/>
    <property type="evidence" value="ECO:0007669"/>
    <property type="project" value="UniProtKB-ARBA"/>
</dbReference>
<dbReference type="GO" id="GO:0004824">
    <property type="term" value="F:lysine-tRNA ligase activity"/>
    <property type="evidence" value="ECO:0007669"/>
    <property type="project" value="UniProtKB-UniRule"/>
</dbReference>
<dbReference type="GO" id="GO:0000287">
    <property type="term" value="F:magnesium ion binding"/>
    <property type="evidence" value="ECO:0007669"/>
    <property type="project" value="UniProtKB-UniRule"/>
</dbReference>
<dbReference type="GO" id="GO:0016740">
    <property type="term" value="F:transferase activity"/>
    <property type="evidence" value="ECO:0007669"/>
    <property type="project" value="UniProtKB-ARBA"/>
</dbReference>
<dbReference type="GO" id="GO:0000049">
    <property type="term" value="F:tRNA binding"/>
    <property type="evidence" value="ECO:0007669"/>
    <property type="project" value="TreeGrafter"/>
</dbReference>
<dbReference type="GO" id="GO:0006430">
    <property type="term" value="P:lysyl-tRNA aminoacylation"/>
    <property type="evidence" value="ECO:0007669"/>
    <property type="project" value="UniProtKB-UniRule"/>
</dbReference>
<dbReference type="CDD" id="cd00775">
    <property type="entry name" value="LysRS_core"/>
    <property type="match status" value="1"/>
</dbReference>
<dbReference type="CDD" id="cd04322">
    <property type="entry name" value="LysRS_N"/>
    <property type="match status" value="1"/>
</dbReference>
<dbReference type="FunFam" id="2.40.50.140:FF:000024">
    <property type="entry name" value="Lysine--tRNA ligase"/>
    <property type="match status" value="1"/>
</dbReference>
<dbReference type="FunFam" id="3.30.930.10:FF:000001">
    <property type="entry name" value="Lysine--tRNA ligase"/>
    <property type="match status" value="1"/>
</dbReference>
<dbReference type="Gene3D" id="3.30.930.10">
    <property type="entry name" value="Bira Bifunctional Protein, Domain 2"/>
    <property type="match status" value="1"/>
</dbReference>
<dbReference type="Gene3D" id="2.40.50.140">
    <property type="entry name" value="Nucleic acid-binding proteins"/>
    <property type="match status" value="1"/>
</dbReference>
<dbReference type="HAMAP" id="MF_00252">
    <property type="entry name" value="Lys_tRNA_synth_class2"/>
    <property type="match status" value="1"/>
</dbReference>
<dbReference type="InterPro" id="IPR004364">
    <property type="entry name" value="Aa-tRNA-synt_II"/>
</dbReference>
<dbReference type="InterPro" id="IPR006195">
    <property type="entry name" value="aa-tRNA-synth_II"/>
</dbReference>
<dbReference type="InterPro" id="IPR045864">
    <property type="entry name" value="aa-tRNA-synth_II/BPL/LPL"/>
</dbReference>
<dbReference type="InterPro" id="IPR002313">
    <property type="entry name" value="Lys-tRNA-ligase_II"/>
</dbReference>
<dbReference type="InterPro" id="IPR034762">
    <property type="entry name" value="Lys-tRNA-ligase_II_bac/euk"/>
</dbReference>
<dbReference type="InterPro" id="IPR044136">
    <property type="entry name" value="Lys-tRNA-ligase_II_N"/>
</dbReference>
<dbReference type="InterPro" id="IPR018149">
    <property type="entry name" value="Lys-tRNA-synth_II_C"/>
</dbReference>
<dbReference type="InterPro" id="IPR012340">
    <property type="entry name" value="NA-bd_OB-fold"/>
</dbReference>
<dbReference type="InterPro" id="IPR004365">
    <property type="entry name" value="NA-bd_OB_tRNA"/>
</dbReference>
<dbReference type="NCBIfam" id="TIGR00499">
    <property type="entry name" value="lysS_bact"/>
    <property type="match status" value="1"/>
</dbReference>
<dbReference type="NCBIfam" id="NF001756">
    <property type="entry name" value="PRK00484.1"/>
    <property type="match status" value="1"/>
</dbReference>
<dbReference type="PANTHER" id="PTHR42918:SF15">
    <property type="entry name" value="LYSINE--TRNA LIGASE, CHLOROPLASTIC_MITOCHONDRIAL"/>
    <property type="match status" value="1"/>
</dbReference>
<dbReference type="PANTHER" id="PTHR42918">
    <property type="entry name" value="LYSYL-TRNA SYNTHETASE"/>
    <property type="match status" value="1"/>
</dbReference>
<dbReference type="Pfam" id="PF00152">
    <property type="entry name" value="tRNA-synt_2"/>
    <property type="match status" value="1"/>
</dbReference>
<dbReference type="Pfam" id="PF01336">
    <property type="entry name" value="tRNA_anti-codon"/>
    <property type="match status" value="1"/>
</dbReference>
<dbReference type="PIRSF" id="PIRSF039101">
    <property type="entry name" value="LysRS2"/>
    <property type="match status" value="1"/>
</dbReference>
<dbReference type="PRINTS" id="PR00982">
    <property type="entry name" value="TRNASYNTHLYS"/>
</dbReference>
<dbReference type="SUPFAM" id="SSF55681">
    <property type="entry name" value="Class II aaRS and biotin synthetases"/>
    <property type="match status" value="1"/>
</dbReference>
<dbReference type="SUPFAM" id="SSF50249">
    <property type="entry name" value="Nucleic acid-binding proteins"/>
    <property type="match status" value="1"/>
</dbReference>
<dbReference type="PROSITE" id="PS50862">
    <property type="entry name" value="AA_TRNA_LIGASE_II"/>
    <property type="match status" value="1"/>
</dbReference>
<proteinExistence type="inferred from homology"/>
<gene>
    <name evidence="1" type="primary">lysS</name>
    <name type="ordered locus">BCE_0075</name>
</gene>
<comment type="catalytic activity">
    <reaction evidence="1">
        <text>tRNA(Lys) + L-lysine + ATP = L-lysyl-tRNA(Lys) + AMP + diphosphate</text>
        <dbReference type="Rhea" id="RHEA:20792"/>
        <dbReference type="Rhea" id="RHEA-COMP:9696"/>
        <dbReference type="Rhea" id="RHEA-COMP:9697"/>
        <dbReference type="ChEBI" id="CHEBI:30616"/>
        <dbReference type="ChEBI" id="CHEBI:32551"/>
        <dbReference type="ChEBI" id="CHEBI:33019"/>
        <dbReference type="ChEBI" id="CHEBI:78442"/>
        <dbReference type="ChEBI" id="CHEBI:78529"/>
        <dbReference type="ChEBI" id="CHEBI:456215"/>
        <dbReference type="EC" id="6.1.1.6"/>
    </reaction>
</comment>
<comment type="cofactor">
    <cofactor evidence="1">
        <name>Mg(2+)</name>
        <dbReference type="ChEBI" id="CHEBI:18420"/>
    </cofactor>
    <text evidence="1">Binds 3 Mg(2+) ions per subunit.</text>
</comment>
<comment type="subunit">
    <text evidence="1">Homodimer.</text>
</comment>
<comment type="subcellular location">
    <subcellularLocation>
        <location evidence="1">Cytoplasm</location>
    </subcellularLocation>
</comment>
<comment type="similarity">
    <text evidence="1">Belongs to the class-II aminoacyl-tRNA synthetase family.</text>
</comment>
<sequence>MDNMNHEELNDQLLVRREKLHNLREQGIDPFGKRFERTNATNELLSLYGEFSKEELEEKEISVSIAGRIMTKRGKGKAGFAHIQDLHGQVQIYVRKDAVGDEEYELFKTADLGDLVGIEGKVFKTNVGELSVKATGFTLLTKSLRPLPDKYHGLKDVEQRYRQRYLDLITSMESRETFVTRSKIIREMRRYLDDNGYLEVETPMMHAIAGGASARPFITHHNALDMELYMRIAIELHLKRLIVGGLEKVYEIGRVFRNEGVSTRHNPEFTMIELYEAYADYKDIMKLTENMVAHIAKQVLGTTTIQYGDYEINLEPEWTRLHMVDAIKEHSGADFWNPMSVEEARELAKEHNVEIKDTMEVGHIINEFFEQKVEDKLIQPTFIYGHPVEISPLAKKNDEDPRFTDRFELFIVAREHANAFTELNDPIDQKERFEAQLKEREQGNDEAHMMDDDYIEALEYGMPPTGGLGIGIDRLVMLLTNAPSIRDVLLFPAMRHKQD</sequence>
<organism>
    <name type="scientific">Bacillus cereus (strain ATCC 10987 / NRS 248)</name>
    <dbReference type="NCBI Taxonomy" id="222523"/>
    <lineage>
        <taxon>Bacteria</taxon>
        <taxon>Bacillati</taxon>
        <taxon>Bacillota</taxon>
        <taxon>Bacilli</taxon>
        <taxon>Bacillales</taxon>
        <taxon>Bacillaceae</taxon>
        <taxon>Bacillus</taxon>
        <taxon>Bacillus cereus group</taxon>
    </lineage>
</organism>
<keyword id="KW-0030">Aminoacyl-tRNA synthetase</keyword>
<keyword id="KW-0067">ATP-binding</keyword>
<keyword id="KW-0963">Cytoplasm</keyword>
<keyword id="KW-0436">Ligase</keyword>
<keyword id="KW-0460">Magnesium</keyword>
<keyword id="KW-0479">Metal-binding</keyword>
<keyword id="KW-0547">Nucleotide-binding</keyword>
<keyword id="KW-0648">Protein biosynthesis</keyword>
<reference key="1">
    <citation type="journal article" date="2004" name="Nucleic Acids Res.">
        <title>The genome sequence of Bacillus cereus ATCC 10987 reveals metabolic adaptations and a large plasmid related to Bacillus anthracis pXO1.</title>
        <authorList>
            <person name="Rasko D.A."/>
            <person name="Ravel J."/>
            <person name="Oekstad O.A."/>
            <person name="Helgason E."/>
            <person name="Cer R.Z."/>
            <person name="Jiang L."/>
            <person name="Shores K.A."/>
            <person name="Fouts D.E."/>
            <person name="Tourasse N.J."/>
            <person name="Angiuoli S.V."/>
            <person name="Kolonay J.F."/>
            <person name="Nelson W.C."/>
            <person name="Kolstoe A.-B."/>
            <person name="Fraser C.M."/>
            <person name="Read T.D."/>
        </authorList>
    </citation>
    <scope>NUCLEOTIDE SEQUENCE [LARGE SCALE GENOMIC DNA]</scope>
    <source>
        <strain>ATCC 10987 / NRS 248</strain>
    </source>
</reference>
<name>SYK_BACC1</name>